<gene>
    <name evidence="1" type="primary">purA</name>
    <name type="ordered locus">CKO_03657</name>
</gene>
<feature type="chain" id="PRO_1000000801" description="Adenylosuccinate synthetase">
    <location>
        <begin position="1"/>
        <end position="432"/>
    </location>
</feature>
<feature type="active site" description="Proton acceptor" evidence="1">
    <location>
        <position position="14"/>
    </location>
</feature>
<feature type="active site" description="Proton donor" evidence="1">
    <location>
        <position position="42"/>
    </location>
</feature>
<feature type="binding site" evidence="1">
    <location>
        <begin position="13"/>
        <end position="19"/>
    </location>
    <ligand>
        <name>GTP</name>
        <dbReference type="ChEBI" id="CHEBI:37565"/>
    </ligand>
</feature>
<feature type="binding site" description="in other chain" evidence="1">
    <location>
        <begin position="14"/>
        <end position="17"/>
    </location>
    <ligand>
        <name>IMP</name>
        <dbReference type="ChEBI" id="CHEBI:58053"/>
        <note>ligand shared between dimeric partners</note>
    </ligand>
</feature>
<feature type="binding site" evidence="1">
    <location>
        <position position="14"/>
    </location>
    <ligand>
        <name>Mg(2+)</name>
        <dbReference type="ChEBI" id="CHEBI:18420"/>
    </ligand>
</feature>
<feature type="binding site" description="in other chain" evidence="1">
    <location>
        <begin position="39"/>
        <end position="42"/>
    </location>
    <ligand>
        <name>IMP</name>
        <dbReference type="ChEBI" id="CHEBI:58053"/>
        <note>ligand shared between dimeric partners</note>
    </ligand>
</feature>
<feature type="binding site" evidence="1">
    <location>
        <begin position="41"/>
        <end position="43"/>
    </location>
    <ligand>
        <name>GTP</name>
        <dbReference type="ChEBI" id="CHEBI:37565"/>
    </ligand>
</feature>
<feature type="binding site" evidence="1">
    <location>
        <position position="41"/>
    </location>
    <ligand>
        <name>Mg(2+)</name>
        <dbReference type="ChEBI" id="CHEBI:18420"/>
    </ligand>
</feature>
<feature type="binding site" description="in other chain" evidence="1">
    <location>
        <position position="130"/>
    </location>
    <ligand>
        <name>IMP</name>
        <dbReference type="ChEBI" id="CHEBI:58053"/>
        <note>ligand shared between dimeric partners</note>
    </ligand>
</feature>
<feature type="binding site" evidence="1">
    <location>
        <position position="144"/>
    </location>
    <ligand>
        <name>IMP</name>
        <dbReference type="ChEBI" id="CHEBI:58053"/>
        <note>ligand shared between dimeric partners</note>
    </ligand>
</feature>
<feature type="binding site" description="in other chain" evidence="1">
    <location>
        <position position="225"/>
    </location>
    <ligand>
        <name>IMP</name>
        <dbReference type="ChEBI" id="CHEBI:58053"/>
        <note>ligand shared between dimeric partners</note>
    </ligand>
</feature>
<feature type="binding site" description="in other chain" evidence="1">
    <location>
        <position position="240"/>
    </location>
    <ligand>
        <name>IMP</name>
        <dbReference type="ChEBI" id="CHEBI:58053"/>
        <note>ligand shared between dimeric partners</note>
    </ligand>
</feature>
<feature type="binding site" evidence="1">
    <location>
        <begin position="300"/>
        <end position="306"/>
    </location>
    <ligand>
        <name>substrate</name>
    </ligand>
</feature>
<feature type="binding site" description="in other chain" evidence="1">
    <location>
        <position position="304"/>
    </location>
    <ligand>
        <name>IMP</name>
        <dbReference type="ChEBI" id="CHEBI:58053"/>
        <note>ligand shared between dimeric partners</note>
    </ligand>
</feature>
<feature type="binding site" evidence="1">
    <location>
        <position position="306"/>
    </location>
    <ligand>
        <name>GTP</name>
        <dbReference type="ChEBI" id="CHEBI:37565"/>
    </ligand>
</feature>
<feature type="binding site" evidence="1">
    <location>
        <begin position="332"/>
        <end position="334"/>
    </location>
    <ligand>
        <name>GTP</name>
        <dbReference type="ChEBI" id="CHEBI:37565"/>
    </ligand>
</feature>
<feature type="binding site" evidence="1">
    <location>
        <begin position="415"/>
        <end position="417"/>
    </location>
    <ligand>
        <name>GTP</name>
        <dbReference type="ChEBI" id="CHEBI:37565"/>
    </ligand>
</feature>
<evidence type="ECO:0000255" key="1">
    <source>
        <dbReference type="HAMAP-Rule" id="MF_00011"/>
    </source>
</evidence>
<comment type="function">
    <text evidence="1">Plays an important role in the de novo pathway of purine nucleotide biosynthesis. Catalyzes the first committed step in the biosynthesis of AMP from IMP.</text>
</comment>
<comment type="catalytic activity">
    <reaction evidence="1">
        <text>IMP + L-aspartate + GTP = N(6)-(1,2-dicarboxyethyl)-AMP + GDP + phosphate + 2 H(+)</text>
        <dbReference type="Rhea" id="RHEA:15753"/>
        <dbReference type="ChEBI" id="CHEBI:15378"/>
        <dbReference type="ChEBI" id="CHEBI:29991"/>
        <dbReference type="ChEBI" id="CHEBI:37565"/>
        <dbReference type="ChEBI" id="CHEBI:43474"/>
        <dbReference type="ChEBI" id="CHEBI:57567"/>
        <dbReference type="ChEBI" id="CHEBI:58053"/>
        <dbReference type="ChEBI" id="CHEBI:58189"/>
        <dbReference type="EC" id="6.3.4.4"/>
    </reaction>
</comment>
<comment type="cofactor">
    <cofactor evidence="1">
        <name>Mg(2+)</name>
        <dbReference type="ChEBI" id="CHEBI:18420"/>
    </cofactor>
    <text evidence="1">Binds 1 Mg(2+) ion per subunit.</text>
</comment>
<comment type="pathway">
    <text evidence="1">Purine metabolism; AMP biosynthesis via de novo pathway; AMP from IMP: step 1/2.</text>
</comment>
<comment type="subunit">
    <text evidence="1">Homodimer.</text>
</comment>
<comment type="subcellular location">
    <subcellularLocation>
        <location evidence="1">Cytoplasm</location>
    </subcellularLocation>
</comment>
<comment type="similarity">
    <text evidence="1">Belongs to the adenylosuccinate synthetase family.</text>
</comment>
<name>PURA_CITK8</name>
<protein>
    <recommendedName>
        <fullName evidence="1">Adenylosuccinate synthetase</fullName>
        <shortName evidence="1">AMPSase</shortName>
        <shortName evidence="1">AdSS</shortName>
        <ecNumber evidence="1">6.3.4.4</ecNumber>
    </recommendedName>
    <alternativeName>
        <fullName evidence="1">IMP--aspartate ligase</fullName>
    </alternativeName>
</protein>
<sequence length="432" mass="47213">MGNNVVVLGTQWGDEGKGKIVDLLTERAKYVVRYQGGHNAGHTLVINGEKTVLHLIPSGILRENVTSIIGNGVVLSPAALMKEMKGLEDRGIPVRERLLLSEACPLILDYHVALDNAREKARGAKAIGTTGRGIGPAYEDKVARRGLRVGDLFDKATFAVKLKEVMEYHNFQLVNFYKVEAVDYQKVLDDVMAIADILTSMVVDVSDLLDQARKRGDFVMFEGAQGTLLDIDHGTYPYVTSSNTTAGGVATGSGLGPRYVDYVLGIIKAYSTRVGAGPFPTELFDDTGEFLCKQGNEYGATTGRRRRTGWLDSVAVRRAVQINSLSGFCLTKLDVLDGLEEVKICVAYRMPDGREVTTTPLAADDWEGIEPIYETMPGWSESTFGVKDRSGLPQAALNYIKRIEELTGVPIDIISTGPDRTETMILRDPFDA</sequence>
<accession>A8AMM3</accession>
<proteinExistence type="inferred from homology"/>
<keyword id="KW-0963">Cytoplasm</keyword>
<keyword id="KW-0342">GTP-binding</keyword>
<keyword id="KW-0436">Ligase</keyword>
<keyword id="KW-0460">Magnesium</keyword>
<keyword id="KW-0479">Metal-binding</keyword>
<keyword id="KW-0547">Nucleotide-binding</keyword>
<keyword id="KW-0658">Purine biosynthesis</keyword>
<keyword id="KW-1185">Reference proteome</keyword>
<organism>
    <name type="scientific">Citrobacter koseri (strain ATCC BAA-895 / CDC 4225-83 / SGSC4696)</name>
    <dbReference type="NCBI Taxonomy" id="290338"/>
    <lineage>
        <taxon>Bacteria</taxon>
        <taxon>Pseudomonadati</taxon>
        <taxon>Pseudomonadota</taxon>
        <taxon>Gammaproteobacteria</taxon>
        <taxon>Enterobacterales</taxon>
        <taxon>Enterobacteriaceae</taxon>
        <taxon>Citrobacter</taxon>
    </lineage>
</organism>
<reference key="1">
    <citation type="submission" date="2007-08" db="EMBL/GenBank/DDBJ databases">
        <authorList>
            <consortium name="The Citrobacter koseri Genome Sequencing Project"/>
            <person name="McClelland M."/>
            <person name="Sanderson E.K."/>
            <person name="Porwollik S."/>
            <person name="Spieth J."/>
            <person name="Clifton W.S."/>
            <person name="Latreille P."/>
            <person name="Courtney L."/>
            <person name="Wang C."/>
            <person name="Pepin K."/>
            <person name="Bhonagiri V."/>
            <person name="Nash W."/>
            <person name="Johnson M."/>
            <person name="Thiruvilangam P."/>
            <person name="Wilson R."/>
        </authorList>
    </citation>
    <scope>NUCLEOTIDE SEQUENCE [LARGE SCALE GENOMIC DNA]</scope>
    <source>
        <strain>ATCC BAA-895 / CDC 4225-83 / SGSC4696</strain>
    </source>
</reference>
<dbReference type="EC" id="6.3.4.4" evidence="1"/>
<dbReference type="EMBL" id="CP000822">
    <property type="protein sequence ID" value="ABV14736.1"/>
    <property type="molecule type" value="Genomic_DNA"/>
</dbReference>
<dbReference type="RefSeq" id="WP_012134433.1">
    <property type="nucleotide sequence ID" value="NC_009792.1"/>
</dbReference>
<dbReference type="SMR" id="A8AMM3"/>
<dbReference type="STRING" id="290338.CKO_03657"/>
<dbReference type="GeneID" id="45137362"/>
<dbReference type="KEGG" id="cko:CKO_03657"/>
<dbReference type="HOGENOM" id="CLU_029848_0_0_6"/>
<dbReference type="OrthoDB" id="9807553at2"/>
<dbReference type="UniPathway" id="UPA00075">
    <property type="reaction ID" value="UER00335"/>
</dbReference>
<dbReference type="Proteomes" id="UP000008148">
    <property type="component" value="Chromosome"/>
</dbReference>
<dbReference type="GO" id="GO:0005737">
    <property type="term" value="C:cytoplasm"/>
    <property type="evidence" value="ECO:0007669"/>
    <property type="project" value="UniProtKB-SubCell"/>
</dbReference>
<dbReference type="GO" id="GO:0004019">
    <property type="term" value="F:adenylosuccinate synthase activity"/>
    <property type="evidence" value="ECO:0007669"/>
    <property type="project" value="UniProtKB-UniRule"/>
</dbReference>
<dbReference type="GO" id="GO:0005525">
    <property type="term" value="F:GTP binding"/>
    <property type="evidence" value="ECO:0007669"/>
    <property type="project" value="UniProtKB-UniRule"/>
</dbReference>
<dbReference type="GO" id="GO:0000287">
    <property type="term" value="F:magnesium ion binding"/>
    <property type="evidence" value="ECO:0007669"/>
    <property type="project" value="UniProtKB-UniRule"/>
</dbReference>
<dbReference type="GO" id="GO:0044208">
    <property type="term" value="P:'de novo' AMP biosynthetic process"/>
    <property type="evidence" value="ECO:0007669"/>
    <property type="project" value="UniProtKB-UniRule"/>
</dbReference>
<dbReference type="GO" id="GO:0046040">
    <property type="term" value="P:IMP metabolic process"/>
    <property type="evidence" value="ECO:0007669"/>
    <property type="project" value="TreeGrafter"/>
</dbReference>
<dbReference type="CDD" id="cd03108">
    <property type="entry name" value="AdSS"/>
    <property type="match status" value="1"/>
</dbReference>
<dbReference type="FunFam" id="1.10.300.10:FF:000001">
    <property type="entry name" value="Adenylosuccinate synthetase"/>
    <property type="match status" value="1"/>
</dbReference>
<dbReference type="FunFam" id="3.90.170.10:FF:000001">
    <property type="entry name" value="Adenylosuccinate synthetase"/>
    <property type="match status" value="1"/>
</dbReference>
<dbReference type="Gene3D" id="3.40.440.10">
    <property type="entry name" value="Adenylosuccinate Synthetase, subunit A, domain 1"/>
    <property type="match status" value="1"/>
</dbReference>
<dbReference type="Gene3D" id="1.10.300.10">
    <property type="entry name" value="Adenylosuccinate Synthetase, subunit A, domain 2"/>
    <property type="match status" value="1"/>
</dbReference>
<dbReference type="Gene3D" id="3.90.170.10">
    <property type="entry name" value="Adenylosuccinate Synthetase, subunit A, domain 3"/>
    <property type="match status" value="1"/>
</dbReference>
<dbReference type="HAMAP" id="MF_00011">
    <property type="entry name" value="Adenylosucc_synth"/>
    <property type="match status" value="1"/>
</dbReference>
<dbReference type="InterPro" id="IPR018220">
    <property type="entry name" value="Adenylosuccin_syn_GTP-bd"/>
</dbReference>
<dbReference type="InterPro" id="IPR033128">
    <property type="entry name" value="Adenylosuccin_syn_Lys_AS"/>
</dbReference>
<dbReference type="InterPro" id="IPR042109">
    <property type="entry name" value="Adenylosuccinate_synth_dom1"/>
</dbReference>
<dbReference type="InterPro" id="IPR042110">
    <property type="entry name" value="Adenylosuccinate_synth_dom2"/>
</dbReference>
<dbReference type="InterPro" id="IPR042111">
    <property type="entry name" value="Adenylosuccinate_synth_dom3"/>
</dbReference>
<dbReference type="InterPro" id="IPR001114">
    <property type="entry name" value="Adenylosuccinate_synthetase"/>
</dbReference>
<dbReference type="InterPro" id="IPR027417">
    <property type="entry name" value="P-loop_NTPase"/>
</dbReference>
<dbReference type="NCBIfam" id="NF002223">
    <property type="entry name" value="PRK01117.1"/>
    <property type="match status" value="1"/>
</dbReference>
<dbReference type="NCBIfam" id="TIGR00184">
    <property type="entry name" value="purA"/>
    <property type="match status" value="1"/>
</dbReference>
<dbReference type="PANTHER" id="PTHR11846">
    <property type="entry name" value="ADENYLOSUCCINATE SYNTHETASE"/>
    <property type="match status" value="1"/>
</dbReference>
<dbReference type="PANTHER" id="PTHR11846:SF0">
    <property type="entry name" value="ADENYLOSUCCINATE SYNTHETASE"/>
    <property type="match status" value="1"/>
</dbReference>
<dbReference type="Pfam" id="PF00709">
    <property type="entry name" value="Adenylsucc_synt"/>
    <property type="match status" value="1"/>
</dbReference>
<dbReference type="SMART" id="SM00788">
    <property type="entry name" value="Adenylsucc_synt"/>
    <property type="match status" value="1"/>
</dbReference>
<dbReference type="SUPFAM" id="SSF52540">
    <property type="entry name" value="P-loop containing nucleoside triphosphate hydrolases"/>
    <property type="match status" value="1"/>
</dbReference>
<dbReference type="PROSITE" id="PS01266">
    <property type="entry name" value="ADENYLOSUCCIN_SYN_1"/>
    <property type="match status" value="1"/>
</dbReference>
<dbReference type="PROSITE" id="PS00513">
    <property type="entry name" value="ADENYLOSUCCIN_SYN_2"/>
    <property type="match status" value="1"/>
</dbReference>